<name>TRI23_HUMAN</name>
<feature type="chain" id="PRO_0000207483" description="E3 ubiquitin-protein ligase TRIM23">
    <location>
        <begin position="1"/>
        <end position="574"/>
    </location>
</feature>
<feature type="zinc finger region" description="RING-type; degenerate" evidence="4">
    <location>
        <begin position="31"/>
        <end position="76"/>
    </location>
</feature>
<feature type="zinc finger region" description="B box-type; degenerate" evidence="3">
    <location>
        <begin position="122"/>
        <end position="168"/>
    </location>
</feature>
<feature type="region of interest" description="ARF-like">
    <location>
        <begin position="390"/>
        <end position="574"/>
    </location>
</feature>
<feature type="coiled-coil region" evidence="2">
    <location>
        <begin position="352"/>
        <end position="379"/>
    </location>
</feature>
<feature type="binding site" evidence="1">
    <location>
        <begin position="411"/>
        <end position="418"/>
    </location>
    <ligand>
        <name>GTP</name>
        <dbReference type="ChEBI" id="CHEBI:37565"/>
    </ligand>
</feature>
<feature type="binding site" evidence="1">
    <location>
        <begin position="454"/>
        <end position="458"/>
    </location>
    <ligand>
        <name>GTP</name>
        <dbReference type="ChEBI" id="CHEBI:37565"/>
    </ligand>
</feature>
<feature type="binding site" evidence="1">
    <location>
        <begin position="513"/>
        <end position="516"/>
    </location>
    <ligand>
        <name>GTP</name>
        <dbReference type="ChEBI" id="CHEBI:37565"/>
    </ligand>
</feature>
<feature type="splice variant" id="VSP_000297" description="In isoform Gamma." evidence="11">
    <original>WYIQGCDARSGMGLYEGLDWLSRQLVAAGVLDVA</original>
    <variation>CFSDNM</variation>
    <location>
        <begin position="541"/>
        <end position="574"/>
    </location>
</feature>
<feature type="splice variant" id="VSP_000296" description="In isoform Beta." evidence="11">
    <original>GMGLYEGLDWLSRQLVAAGVLDVA</original>
    <variation>VFQIICDQYTGKEVVTEKG</variation>
    <location>
        <begin position="551"/>
        <end position="574"/>
    </location>
</feature>
<feature type="sequence variant" id="VAR_048320" description="In dbSNP:rs34046496.">
    <original>D</original>
    <variation>N</variation>
    <location>
        <position position="480"/>
    </location>
</feature>
<feature type="mutagenesis site" description="Loss of E3 ubiquitin-protein ligase activity." evidence="6">
    <original>C</original>
    <variation>A</variation>
    <location>
        <position position="34"/>
    </location>
</feature>
<feature type="mutagenesis site" description="Loss of E3 ubiquitin-protein ligase activity." evidence="6">
    <original>H</original>
    <variation>A</variation>
    <location>
        <position position="53"/>
    </location>
</feature>
<feature type="mutagenesis site" description="Maintains GTPase activity. Increases interaction with PSCD1." evidence="5">
    <original>T</original>
    <variation>N</variation>
    <location>
        <position position="418"/>
    </location>
</feature>
<feature type="mutagenesis site" description="Suppresses GTPase activity. Decreases interaction with PSCD1." evidence="5">
    <original>K</original>
    <variation>I</variation>
    <location>
        <position position="458"/>
    </location>
</feature>
<feature type="turn" evidence="13">
    <location>
        <begin position="32"/>
        <end position="34"/>
    </location>
</feature>
<feature type="strand" evidence="13">
    <location>
        <begin position="40"/>
        <end position="42"/>
    </location>
</feature>
<feature type="strand" evidence="13">
    <location>
        <begin position="46"/>
        <end position="48"/>
    </location>
</feature>
<feature type="strand" evidence="13">
    <location>
        <begin position="54"/>
        <end position="56"/>
    </location>
</feature>
<feature type="helix" evidence="13">
    <location>
        <begin position="57"/>
        <end position="62"/>
    </location>
</feature>
<feature type="strand" evidence="13">
    <location>
        <begin position="69"/>
        <end position="71"/>
    </location>
</feature>
<feature type="turn" evidence="13">
    <location>
        <begin position="73"/>
        <end position="75"/>
    </location>
</feature>
<feature type="strand" evidence="13">
    <location>
        <begin position="78"/>
        <end position="80"/>
    </location>
</feature>
<feature type="helix" evidence="13">
    <location>
        <begin position="85"/>
        <end position="88"/>
    </location>
</feature>
<feature type="helix" evidence="13">
    <location>
        <begin position="93"/>
        <end position="103"/>
    </location>
</feature>
<protein>
    <recommendedName>
        <fullName>E3 ubiquitin-protein ligase TRIM23</fullName>
        <ecNumber>2.3.2.27</ecNumber>
    </recommendedName>
    <alternativeName>
        <fullName>ADP-ribosylation factor domain-containing protein 1</fullName>
    </alternativeName>
    <alternativeName>
        <fullName>GTP-binding protein ARD-1</fullName>
    </alternativeName>
    <alternativeName>
        <fullName>RING finger protein 46</fullName>
    </alternativeName>
    <alternativeName>
        <fullName evidence="12">RING-type E3 ubiquitin transferase TRIM23</fullName>
    </alternativeName>
    <alternativeName>
        <fullName>Tripartite motif-containing protein 23</fullName>
    </alternativeName>
</protein>
<sequence length="574" mass="64067">MATLVVNKLGAGVDSGRQGSRGTAVVKVLECGVCEDVFSLQGDKVPRLLLCGHTVCHDCLTRLPLHGRAIRCPFDRQVTDLGDSGVWGLKKNFALLELLERLQNGPIGQYGAAEESIGISGESIIRCDEDEAHLASVYCTVCATHLCSECSQVTHSTKTLAKHRRVPLADKPHEKTMCSQHQVHAIEFVCLEEGCQTSPLMCCVCKEYGKHQGHKHSVLEPEANQIRASILDMAHCIRTFTEEISDYSRKLVGIVQHIEGGEQIVEDGIGMAHTEHVPGTAENARSCIRAYFYDLHETLCRQEEMALSVVDAHVREKLIWLRQQQEDMTILLSEVSAACLHCEKTLQQDDCRVVLAKQEITRLLETLQKQQQQFTEVADHIQLDASIPVTFTKDNRVHIGPKMEIRVVTLGLDGAGKTTILFKLKQDEFMQPIPTIGFNVETVEYKNLKFTIWDVGGKHKLRPLWKHYYLNTQAVVFVVDSSHRDRISEAHSELAKLLTEKELRDALLLIFANKQDVAGALSVEEITELLSLHKLCCGRSWYIQGCDARSGMGLYEGLDWLSRQLVAAGVLDVA</sequence>
<accession>P36406</accession>
<accession>Q9BZY4</accession>
<accession>Q9BZY5</accession>
<organism>
    <name type="scientific">Homo sapiens</name>
    <name type="common">Human</name>
    <dbReference type="NCBI Taxonomy" id="9606"/>
    <lineage>
        <taxon>Eukaryota</taxon>
        <taxon>Metazoa</taxon>
        <taxon>Chordata</taxon>
        <taxon>Craniata</taxon>
        <taxon>Vertebrata</taxon>
        <taxon>Euteleostomi</taxon>
        <taxon>Mammalia</taxon>
        <taxon>Eutheria</taxon>
        <taxon>Euarchontoglires</taxon>
        <taxon>Primates</taxon>
        <taxon>Haplorrhini</taxon>
        <taxon>Catarrhini</taxon>
        <taxon>Hominidae</taxon>
        <taxon>Homo</taxon>
    </lineage>
</organism>
<reference key="1">
    <citation type="journal article" date="1993" name="J. Biol. Chem.">
        <title>ARD 1, a 64-kDa guanine nucleotide-binding protein with a carboxyl-terminal ADP-ribosylation factor domain.</title>
        <authorList>
            <person name="Mishima K."/>
            <person name="Tsuchiya M."/>
            <person name="Nightingale M.S."/>
            <person name="Moss J."/>
            <person name="Vaughan M."/>
        </authorList>
    </citation>
    <scope>NUCLEOTIDE SEQUENCE [MRNA] (ISOFORM ALPHA)</scope>
</reference>
<reference key="2">
    <citation type="journal article" date="2001" name="EMBO J.">
        <title>The tripartite motif family identifies cell compartments.</title>
        <authorList>
            <person name="Reymond A."/>
            <person name="Meroni G."/>
            <person name="Fantozzi A."/>
            <person name="Merla G."/>
            <person name="Cairo S."/>
            <person name="Luzi L."/>
            <person name="Riganelli D."/>
            <person name="Zanaria E."/>
            <person name="Messali S."/>
            <person name="Cainarca S."/>
            <person name="Guffanti A."/>
            <person name="Minucci S."/>
            <person name="Pelicci P.G."/>
            <person name="Ballabio A."/>
        </authorList>
    </citation>
    <scope>NUCLEOTIDE SEQUENCE [MRNA] (ISOFORMS ALPHA; BETA AND GAMMA)</scope>
</reference>
<reference key="3">
    <citation type="journal article" date="2004" name="Genome Res.">
        <title>The status, quality, and expansion of the NIH full-length cDNA project: the Mammalian Gene Collection (MGC).</title>
        <authorList>
            <consortium name="The MGC Project Team"/>
        </authorList>
    </citation>
    <scope>NUCLEOTIDE SEQUENCE [LARGE SCALE MRNA] (ISOFORM ALPHA)</scope>
    <source>
        <tissue>Brain</tissue>
    </source>
</reference>
<reference key="4">
    <citation type="journal article" date="1998" name="Proc. Natl. Acad. Sci. U.S.A.">
        <title>Localization of ADP-ribosylation factor domain protein 1 (ARD1) in lysosomes and Golgi apparatus.</title>
        <authorList>
            <person name="Vitale N."/>
            <person name="Horiba K."/>
            <person name="Ferrans V.J."/>
            <person name="Moss J."/>
            <person name="Vaughan M."/>
        </authorList>
    </citation>
    <scope>SUBCELLULAR LOCATION</scope>
</reference>
<reference key="5">
    <citation type="journal article" date="2000" name="J. Biol. Chem.">
        <title>Specific functional interaction of human cytohesin-1 and ADP-ribosylation factor domain protein (ARD1).</title>
        <authorList>
            <person name="Vitale N."/>
            <person name="Pacheco-Rodriguez G."/>
            <person name="Ferrans V.J."/>
            <person name="Riemenschneider W."/>
            <person name="Moss J."/>
            <person name="Vaughan M."/>
        </authorList>
    </citation>
    <scope>INTERACTION WITH PSCD1</scope>
    <scope>MUTAGENESIS OF THR-418 AND LYS-458</scope>
</reference>
<reference key="6">
    <citation type="journal article" date="2005" name="Proc. Natl. Acad. Sci. U.S.A.">
        <title>E3 ubiquitin ligase activity of the trifunctional ARD1 (ADP-ribosylation factor domain protein 1).</title>
        <authorList>
            <person name="Vichi A."/>
            <person name="Payne D.M."/>
            <person name="Pacheco-Rodriguez G."/>
            <person name="Moss J."/>
            <person name="Vaughan M."/>
        </authorList>
    </citation>
    <scope>FUNCTION</scope>
    <scope>MUTAGENESIS OF CYS-34 AND HIS-53</scope>
</reference>
<reference key="7">
    <citation type="journal article" date="2009" name="J. Virol.">
        <title>Identification of TRIM23 as a cofactor involved in the regulation of NF-kappaB by human cytomegalovirus.</title>
        <authorList>
            <person name="Poole E."/>
            <person name="Groves I."/>
            <person name="MacDonald A."/>
            <person name="Pang Y."/>
            <person name="Alcami A."/>
            <person name="Sinclair J."/>
        </authorList>
    </citation>
    <scope>INTERACTION WITH HUMAN CYTOMEGALOVIRUS PROTEIN UL144</scope>
</reference>
<reference key="8">
    <citation type="journal article" date="2017" name="Nat. Microbiol.">
        <title>TRIM23 mediates virus-induced autophagy via activation of TBK1.</title>
        <authorList>
            <person name="Sparrer K.M.J."/>
            <person name="Gableske S."/>
            <person name="Zurenski M.A."/>
            <person name="Parker Z.M."/>
            <person name="Full F."/>
            <person name="Baumgart G.J."/>
            <person name="Kato J."/>
            <person name="Pacheco-Rodriguez G."/>
            <person name="Liang C."/>
            <person name="Pornillos O."/>
            <person name="Moss J."/>
            <person name="Vaughan M."/>
            <person name="Gack M.U."/>
        </authorList>
    </citation>
    <scope>FUNCTION</scope>
    <scope>INTERACTION WITH TBK1 AND SQSTM1</scope>
    <scope>SUBCELLULAR LOCATION</scope>
</reference>
<reference key="9">
    <citation type="journal article" date="2017" name="Proteins">
        <title>Structure and catalytic activation of the TRIM23 RING E3 ubiquitin ligase.</title>
        <authorList>
            <person name="Dawidziak D.M."/>
            <person name="Sanchez J.G."/>
            <person name="Wagner J.M."/>
            <person name="Ganser-Pornillos B.K."/>
            <person name="Pornillos O."/>
        </authorList>
    </citation>
    <scope>X-RAY CRYSTALLOGRAPHY (1.81 ANGSTROMS) OF 1-123</scope>
    <scope>SUBUNIT</scope>
    <scope>INTERACTION WITH UBE2D2</scope>
    <scope>DOMAIN</scope>
</reference>
<gene>
    <name type="primary">TRIM23</name>
    <name type="synonym">ARD1</name>
    <name type="synonym">ARFD1</name>
    <name type="synonym">RNF46</name>
</gene>
<evidence type="ECO:0000250" key="1"/>
<evidence type="ECO:0000255" key="2"/>
<evidence type="ECO:0000255" key="3">
    <source>
        <dbReference type="PROSITE-ProRule" id="PRU00024"/>
    </source>
</evidence>
<evidence type="ECO:0000255" key="4">
    <source>
        <dbReference type="PROSITE-ProRule" id="PRU00175"/>
    </source>
</evidence>
<evidence type="ECO:0000269" key="5">
    <source>
    </source>
</evidence>
<evidence type="ECO:0000269" key="6">
    <source>
    </source>
</evidence>
<evidence type="ECO:0000269" key="7">
    <source>
    </source>
</evidence>
<evidence type="ECO:0000269" key="8">
    <source>
    </source>
</evidence>
<evidence type="ECO:0000269" key="9">
    <source>
    </source>
</evidence>
<evidence type="ECO:0000269" key="10">
    <source>
    </source>
</evidence>
<evidence type="ECO:0000303" key="11">
    <source>
    </source>
</evidence>
<evidence type="ECO:0000305" key="12"/>
<evidence type="ECO:0007829" key="13">
    <source>
        <dbReference type="PDB" id="5VZV"/>
    </source>
</evidence>
<comment type="function">
    <text evidence="6 9">Acts as an E3 ubiquitin-protein ligase. Plays an essential role in autophagy activation during viral infection. Mechanistically, activates TANK-binding kinase 1/TBK1 by facilitating its dimerization and ability to phosphorylate the selective autophagy receptor SQSTM1. In order to achieve this function, TRIM23 mediates 'Lys-27'-linked auto-ubiquitination of its ADP-ribosylation factor (ARF) domain to induce its GTPase activity and its recruitment to autophagosomes (PubMed:28871090).</text>
</comment>
<comment type="function">
    <text evidence="6">(Microbial infection) Mediates TRAF6 auto-ubiquitination in the presence of human cytomegalovirus protein UL144, resulting in the virally controlled activation of NF-kappa-B stimulation at early times of HCMV infection.</text>
</comment>
<comment type="catalytic activity">
    <reaction>
        <text>S-ubiquitinyl-[E2 ubiquitin-conjugating enzyme]-L-cysteine + [acceptor protein]-L-lysine = [E2 ubiquitin-conjugating enzyme]-L-cysteine + N(6)-ubiquitinyl-[acceptor protein]-L-lysine.</text>
        <dbReference type="EC" id="2.3.2.27"/>
    </reaction>
</comment>
<comment type="pathway">
    <text>Protein modification; protein ubiquitination.</text>
</comment>
<comment type="subunit">
    <text evidence="5 8 9">Homodimer. Interacts with PSCD1. Interacts with UBE2D2 (PubMed:28681414). Interacts with TBK1 (via N-terminal kinase domain) and p62/SQSTM1.</text>
</comment>
<comment type="subunit">
    <text evidence="7">(Microbial infection) Interacts with human cytomegalovirus protein UL144; this interaction might cause autoubiquitination of TRAF6, leading to NF-kappa-B activation.</text>
</comment>
<comment type="interaction">
    <interactant intactId="EBI-740098">
        <id>P36406</id>
    </interactant>
    <interactant intactId="EBI-16430749">
        <id>A0A0S2Z3G1</id>
        <label>ACTN4</label>
    </interactant>
    <organismsDiffer>false</organismsDiffer>
    <experiments>3</experiments>
</comment>
<comment type="interaction">
    <interactant intactId="EBI-740098">
        <id>P36406</id>
    </interactant>
    <interactant intactId="EBI-744859">
        <id>Q96IX9</id>
        <label>ANKRD36BP1</label>
    </interactant>
    <organismsDiffer>false</organismsDiffer>
    <experiments>3</experiments>
</comment>
<comment type="interaction">
    <interactant intactId="EBI-740098">
        <id>P36406</id>
    </interactant>
    <interactant intactId="EBI-14493093">
        <id>Q3KP44</id>
        <label>ANKRD55</label>
    </interactant>
    <organismsDiffer>false</organismsDiffer>
    <experiments>3</experiments>
</comment>
<comment type="interaction">
    <interactant intactId="EBI-740098">
        <id>P36406</id>
    </interactant>
    <interactant intactId="EBI-2371151">
        <id>Q9Y2T2</id>
        <label>AP3M1</label>
    </interactant>
    <organismsDiffer>false</organismsDiffer>
    <experiments>3</experiments>
</comment>
<comment type="interaction">
    <interactant intactId="EBI-740098">
        <id>P36406</id>
    </interactant>
    <interactant intactId="EBI-745213">
        <id>P29972</id>
        <label>AQP1</label>
    </interactant>
    <organismsDiffer>false</organismsDiffer>
    <experiments>6</experiments>
</comment>
<comment type="interaction">
    <interactant intactId="EBI-740098">
        <id>P36406</id>
    </interactant>
    <interactant intactId="EBI-716933">
        <id>Q8N6T3</id>
        <label>ARFGAP1</label>
    </interactant>
    <organismsDiffer>false</organismsDiffer>
    <experiments>3</experiments>
</comment>
<comment type="interaction">
    <interactant intactId="EBI-740098">
        <id>P36406</id>
    </interactant>
    <interactant intactId="EBI-10312733">
        <id>Q9NR81</id>
        <label>ARHGEF3</label>
    </interactant>
    <organismsDiffer>false</organismsDiffer>
    <experiments>5</experiments>
</comment>
<comment type="interaction">
    <interactant intactId="EBI-740098">
        <id>P36406</id>
    </interactant>
    <interactant intactId="EBI-1166928">
        <id>Q8N5M1</id>
        <label>ATPAF2</label>
    </interactant>
    <organismsDiffer>false</organismsDiffer>
    <experiments>7</experiments>
</comment>
<comment type="interaction">
    <interactant intactId="EBI-740098">
        <id>P36406</id>
    </interactant>
    <interactant intactId="EBI-930964">
        <id>P54253</id>
        <label>ATXN1</label>
    </interactant>
    <organismsDiffer>false</organismsDiffer>
    <experiments>6</experiments>
</comment>
<comment type="interaction">
    <interactant intactId="EBI-740098">
        <id>P36406</id>
    </interactant>
    <interactant intactId="EBI-1030678">
        <id>Q99933</id>
        <label>BAG1</label>
    </interactant>
    <organismsDiffer>false</organismsDiffer>
    <experiments>5</experiments>
</comment>
<comment type="interaction">
    <interactant intactId="EBI-740098">
        <id>P36406</id>
    </interactant>
    <interactant intactId="EBI-1012434">
        <id>Q6AI39</id>
        <label>BICRAL</label>
    </interactant>
    <organismsDiffer>false</organismsDiffer>
    <experiments>3</experiments>
</comment>
<comment type="interaction">
    <interactant intactId="EBI-740098">
        <id>P36406</id>
    </interactant>
    <interactant intactId="EBI-741210">
        <id>Q0VDD7</id>
        <label>BRME1</label>
    </interactant>
    <organismsDiffer>false</organismsDiffer>
    <experiments>4</experiments>
</comment>
<comment type="interaction">
    <interactant intactId="EBI-740098">
        <id>P36406</id>
    </interactant>
    <interactant intactId="EBI-739879">
        <id>Q53TS8</id>
        <label>C2CD6</label>
    </interactant>
    <organismsDiffer>false</organismsDiffer>
    <experiments>3</experiments>
</comment>
<comment type="interaction">
    <interactant intactId="EBI-740098">
        <id>P36406</id>
    </interactant>
    <interactant intactId="EBI-715389">
        <id>Q9H7E9</id>
        <label>C8orf33</label>
    </interactant>
    <organismsDiffer>false</organismsDiffer>
    <experiments>3</experiments>
</comment>
<comment type="interaction">
    <interactant intactId="EBI-740098">
        <id>P36406</id>
    </interactant>
    <interactant intactId="EBI-751319">
        <id>Q9H257</id>
        <label>CARD9</label>
    </interactant>
    <organismsDiffer>false</organismsDiffer>
    <experiments>4</experiments>
</comment>
<comment type="interaction">
    <interactant intactId="EBI-740098">
        <id>P36406</id>
    </interactant>
    <interactant intactId="EBI-718729">
        <id>P55212</id>
        <label>CASP6</label>
    </interactant>
    <organismsDiffer>false</organismsDiffer>
    <experiments>3</experiments>
</comment>
<comment type="interaction">
    <interactant intactId="EBI-740098">
        <id>P36406</id>
    </interactant>
    <interactant intactId="EBI-712912">
        <id>Q9HC52</id>
        <label>CBX8</label>
    </interactant>
    <organismsDiffer>false</organismsDiffer>
    <experiments>3</experiments>
</comment>
<comment type="interaction">
    <interactant intactId="EBI-740098">
        <id>P36406</id>
    </interactant>
    <interactant intactId="EBI-10961312">
        <id>Q8IYE1</id>
        <label>CCDC13</label>
    </interactant>
    <organismsDiffer>false</organismsDiffer>
    <experiments>3</experiments>
</comment>
<comment type="interaction">
    <interactant intactId="EBI-740098">
        <id>P36406</id>
    </interactant>
    <interactant intactId="EBI-10247802">
        <id>Q8IYE0-2</id>
        <label>CCDC146</label>
    </interactant>
    <organismsDiffer>false</organismsDiffer>
    <experiments>3</experiments>
</comment>
<comment type="interaction">
    <interactant intactId="EBI-740098">
        <id>P36406</id>
    </interactant>
    <interactant intactId="EBI-2690264">
        <id>Q86WR0</id>
        <label>CCDC25</label>
    </interactant>
    <organismsDiffer>false</organismsDiffer>
    <experiments>3</experiments>
</comment>
<comment type="interaction">
    <interactant intactId="EBI-740098">
        <id>P36406</id>
    </interactant>
    <interactant intactId="EBI-10260504">
        <id>Q86Y33</id>
        <label>CDC20B</label>
    </interactant>
    <organismsDiffer>false</organismsDiffer>
    <experiments>3</experiments>
</comment>
<comment type="interaction">
    <interactant intactId="EBI-740098">
        <id>P36406</id>
    </interactant>
    <interactant intactId="EBI-930143">
        <id>Q6P1J9</id>
        <label>CDC73</label>
    </interactant>
    <organismsDiffer>false</organismsDiffer>
    <experiments>3</experiments>
</comment>
<comment type="interaction">
    <interactant intactId="EBI-740098">
        <id>P36406</id>
    </interactant>
    <interactant intactId="EBI-1181367">
        <id>Q01850</id>
        <label>CDR2</label>
    </interactant>
    <organismsDiffer>false</organismsDiffer>
    <experiments>6</experiments>
</comment>
<comment type="interaction">
    <interactant intactId="EBI-740098">
        <id>P36406</id>
    </interactant>
    <interactant intactId="EBI-742422">
        <id>Q96M91</id>
        <label>CFAP53</label>
    </interactant>
    <organismsDiffer>false</organismsDiffer>
    <experiments>3</experiments>
</comment>
<comment type="interaction">
    <interactant intactId="EBI-740098">
        <id>P36406</id>
    </interactant>
    <interactant intactId="EBI-12093053">
        <id>O43247-2</id>
        <label>CIMIP4</label>
    </interactant>
    <organismsDiffer>false</organismsDiffer>
    <experiments>3</experiments>
</comment>
<comment type="interaction">
    <interactant intactId="EBI-740098">
        <id>P36406</id>
    </interactant>
    <interactant intactId="EBI-1053725">
        <id>P10606</id>
        <label>COX5B</label>
    </interactant>
    <organismsDiffer>false</organismsDiffer>
    <experiments>5</experiments>
</comment>
<comment type="interaction">
    <interactant intactId="EBI-740098">
        <id>P36406</id>
    </interactant>
    <interactant intactId="EBI-12012272">
        <id>Q9UBL6-2</id>
        <label>CPNE7</label>
    </interactant>
    <organismsDiffer>false</organismsDiffer>
    <experiments>3</experiments>
</comment>
<comment type="interaction">
    <interactant intactId="EBI-740098">
        <id>P36406</id>
    </interactant>
    <interactant intactId="EBI-10192698">
        <id>Q02930-3</id>
        <label>CREB5</label>
    </interactant>
    <organismsDiffer>false</organismsDiffer>
    <experiments>3</experiments>
</comment>
<comment type="interaction">
    <interactant intactId="EBI-740098">
        <id>P36406</id>
    </interactant>
    <interactant intactId="EBI-2959737">
        <id>Q16527</id>
        <label>CSRP2</label>
    </interactant>
    <organismsDiffer>false</organismsDiffer>
    <experiments>3</experiments>
</comment>
<comment type="interaction">
    <interactant intactId="EBI-740098">
        <id>P36406</id>
    </interactant>
    <interactant intactId="EBI-5453285">
        <id>Q2TBE0</id>
        <label>CWF19L2</label>
    </interactant>
    <organismsDiffer>false</organismsDiffer>
    <experiments>3</experiments>
</comment>
<comment type="interaction">
    <interactant intactId="EBI-740098">
        <id>P36406</id>
    </interactant>
    <interactant intactId="EBI-2798068">
        <id>O95715</id>
        <label>CXCL14</label>
    </interactant>
    <organismsDiffer>false</organismsDiffer>
    <experiments>3</experiments>
</comment>
<comment type="interaction">
    <interactant intactId="EBI-740098">
        <id>P36406</id>
    </interactant>
    <interactant intactId="EBI-8646694">
        <id>O43602</id>
        <label>DCX</label>
    </interactant>
    <organismsDiffer>false</organismsDiffer>
    <experiments>3</experiments>
</comment>
<comment type="interaction">
    <interactant intactId="EBI-740098">
        <id>P36406</id>
    </interactant>
    <interactant intactId="EBI-930865">
        <id>Q14565</id>
        <label>DMC1</label>
    </interactant>
    <organismsDiffer>false</organismsDiffer>
    <experiments>3</experiments>
</comment>
<comment type="interaction">
    <interactant intactId="EBI-740098">
        <id>P36406</id>
    </interactant>
    <interactant intactId="EBI-9679045">
        <id>Q9NQL9</id>
        <label>DMRT3</label>
    </interactant>
    <organismsDiffer>false</organismsDiffer>
    <experiments>3</experiments>
</comment>
<comment type="interaction">
    <interactant intactId="EBI-740098">
        <id>P36406</id>
    </interactant>
    <interactant intactId="EBI-448771">
        <id>Q92608</id>
        <label>DOCK2</label>
    </interactant>
    <organismsDiffer>false</organismsDiffer>
    <experiments>3</experiments>
</comment>
<comment type="interaction">
    <interactant intactId="EBI-740098">
        <id>P36406</id>
    </interactant>
    <interactant intactId="EBI-1245604">
        <id>Q96CJ1</id>
        <label>EAF2</label>
    </interactant>
    <organismsDiffer>false</organismsDiffer>
    <experiments>3</experiments>
</comment>
<comment type="interaction">
    <interactant intactId="EBI-740098">
        <id>P36406</id>
    </interactant>
    <interactant intactId="EBI-2339219">
        <id>Q08426</id>
        <label>EHHADH</label>
    </interactant>
    <organismsDiffer>false</organismsDiffer>
    <experiments>3</experiments>
</comment>
<comment type="interaction">
    <interactant intactId="EBI-740098">
        <id>P36406</id>
    </interactant>
    <interactant intactId="EBI-353818">
        <id>O15371</id>
        <label>EIF3D</label>
    </interactant>
    <organismsDiffer>false</organismsDiffer>
    <experiments>3</experiments>
</comment>
<comment type="interaction">
    <interactant intactId="EBI-740098">
        <id>P36406</id>
    </interactant>
    <interactant intactId="EBI-744099">
        <id>Q9H0I2</id>
        <label>ENKD1</label>
    </interactant>
    <organismsDiffer>false</organismsDiffer>
    <experiments>3</experiments>
</comment>
<comment type="interaction">
    <interactant intactId="EBI-740098">
        <id>P36406</id>
    </interactant>
    <interactant intactId="EBI-12135243">
        <id>O95208-2</id>
        <label>EPN2</label>
    </interactant>
    <organismsDiffer>false</organismsDiffer>
    <experiments>3</experiments>
</comment>
<comment type="interaction">
    <interactant intactId="EBI-740098">
        <id>P36406</id>
    </interactant>
    <interactant intactId="EBI-749333">
        <id>Q8N2X6</id>
        <label>EXOC3-AS1</label>
    </interactant>
    <organismsDiffer>false</organismsDiffer>
    <experiments>3</experiments>
</comment>
<comment type="interaction">
    <interactant intactId="EBI-740098">
        <id>P36406</id>
    </interactant>
    <interactant intactId="EBI-1752811">
        <id>Q9BQ89</id>
        <label>FAM110A</label>
    </interactant>
    <organismsDiffer>false</organismsDiffer>
    <experiments>6</experiments>
</comment>
<comment type="interaction">
    <interactant intactId="EBI-740098">
        <id>P36406</id>
    </interactant>
    <interactant intactId="EBI-10268158">
        <id>Q8N9E0</id>
        <label>FAM133A</label>
    </interactant>
    <organismsDiffer>false</organismsDiffer>
    <experiments>6</experiments>
</comment>
<comment type="interaction">
    <interactant intactId="EBI-740098">
        <id>P36406</id>
    </interactant>
    <interactant intactId="EBI-10292648">
        <id>Q96PV7-2</id>
        <label>FAM193B</label>
    </interactant>
    <organismsDiffer>false</organismsDiffer>
    <experiments>3</experiments>
</comment>
<comment type="interaction">
    <interactant intactId="EBI-740098">
        <id>P36406</id>
    </interactant>
    <interactant intactId="EBI-1384254">
        <id>Q86UY5</id>
        <label>FAM83A</label>
    </interactant>
    <organismsDiffer>false</organismsDiffer>
    <experiments>3</experiments>
</comment>
<comment type="interaction">
    <interactant intactId="EBI-740098">
        <id>P36406</id>
    </interactant>
    <interactant intactId="EBI-6658203">
        <id>Q86YD7</id>
        <label>FAM90A1</label>
    </interactant>
    <organismsDiffer>false</organismsDiffer>
    <experiments>6</experiments>
</comment>
<comment type="interaction">
    <interactant intactId="EBI-740098">
        <id>P36406</id>
    </interactant>
    <interactant intactId="EBI-10244131">
        <id>Q8TES7-6</id>
        <label>FBF1</label>
    </interactant>
    <organismsDiffer>false</organismsDiffer>
    <experiments>3</experiments>
</comment>
<comment type="interaction">
    <interactant intactId="EBI-740098">
        <id>P36406</id>
    </interactant>
    <interactant intactId="EBI-348399">
        <id>P22607</id>
        <label>FGFR3</label>
    </interactant>
    <organismsDiffer>false</organismsDiffer>
    <experiments>3</experiments>
</comment>
<comment type="interaction">
    <interactant intactId="EBI-740098">
        <id>P36406</id>
    </interactant>
    <interactant intactId="EBI-11526128">
        <id>Q8NFF5-2</id>
        <label>FLAD1</label>
    </interactant>
    <organismsDiffer>false</organismsDiffer>
    <experiments>3</experiments>
</comment>
<comment type="interaction">
    <interactant intactId="EBI-740098">
        <id>P36406</id>
    </interactant>
    <interactant intactId="EBI-10176227">
        <id>C0H5X2</id>
        <label>FLJ38668</label>
    </interactant>
    <organismsDiffer>false</organismsDiffer>
    <experiments>3</experiments>
</comment>
<comment type="interaction">
    <interactant intactId="EBI-740098">
        <id>P36406</id>
    </interactant>
    <interactant intactId="EBI-16430771">
        <id>A0A0S2Z4D9</id>
        <label>GAD1</label>
    </interactant>
    <organismsDiffer>false</organismsDiffer>
    <experiments>3</experiments>
</comment>
<comment type="interaction">
    <interactant intactId="EBI-740098">
        <id>P36406</id>
    </interactant>
    <interactant intactId="EBI-2806671">
        <id>P23769</id>
        <label>GATA2</label>
    </interactant>
    <organismsDiffer>false</organismsDiffer>
    <experiments>4</experiments>
</comment>
<comment type="interaction">
    <interactant intactId="EBI-740098">
        <id>P36406</id>
    </interactant>
    <interactant intactId="EBI-744104">
        <id>P55040</id>
        <label>GEM</label>
    </interactant>
    <organismsDiffer>false</organismsDiffer>
    <experiments>7</experiments>
</comment>
<comment type="interaction">
    <interactant intactId="EBI-740098">
        <id>P36406</id>
    </interactant>
    <interactant intactId="EBI-12075758">
        <id>Q9NZ52-2</id>
        <label>GGA3</label>
    </interactant>
    <organismsDiffer>false</organismsDiffer>
    <experiments>3</experiments>
</comment>
<comment type="interaction">
    <interactant intactId="EBI-740098">
        <id>P36406</id>
    </interactant>
    <interactant intactId="EBI-745707">
        <id>Q8NEA9</id>
        <label>GMCL2</label>
    </interactant>
    <organismsDiffer>false</organismsDiffer>
    <experiments>3</experiments>
</comment>
<comment type="interaction">
    <interactant intactId="EBI-740098">
        <id>P36406</id>
    </interactant>
    <interactant intactId="EBI-751540">
        <id>O95872</id>
        <label>GPANK1</label>
    </interactant>
    <organismsDiffer>false</organismsDiffer>
    <experiments>7</experiments>
</comment>
<comment type="interaction">
    <interactant intactId="EBI-740098">
        <id>P36406</id>
    </interactant>
    <interactant intactId="EBI-746309">
        <id>Q92917</id>
        <label>GPKOW</label>
    </interactant>
    <organismsDiffer>false</organismsDiffer>
    <experiments>4</experiments>
</comment>
<comment type="interaction">
    <interactant intactId="EBI-740098">
        <id>P36406</id>
    </interactant>
    <interactant intactId="EBI-8285963">
        <id>Q14957</id>
        <label>GRIN2C</label>
    </interactant>
    <organismsDiffer>false</organismsDiffer>
    <experiments>3</experiments>
</comment>
<comment type="interaction">
    <interactant intactId="EBI-740098">
        <id>P36406</id>
    </interactant>
    <interactant intactId="EBI-351506">
        <id>P06396</id>
        <label>GSN</label>
    </interactant>
    <organismsDiffer>false</organismsDiffer>
    <experiments>3</experiments>
</comment>
<comment type="interaction">
    <interactant intactId="EBI-740098">
        <id>P36406</id>
    </interactant>
    <interactant intactId="EBI-11956675">
        <id>Q9GZV7</id>
        <label>HAPLN2</label>
    </interactant>
    <organismsDiffer>false</organismsDiffer>
    <experiments>3</experiments>
</comment>
<comment type="interaction">
    <interactant intactId="EBI-740098">
        <id>P36406</id>
    </interactant>
    <interactant intactId="EBI-2514791">
        <id>Q96CS2</id>
        <label>HAUS1</label>
    </interactant>
    <organismsDiffer>false</organismsDiffer>
    <experiments>3</experiments>
</comment>
<comment type="interaction">
    <interactant intactId="EBI-740098">
        <id>P36406</id>
    </interactant>
    <interactant intactId="EBI-740220">
        <id>O14964</id>
        <label>HGS</label>
    </interactant>
    <organismsDiffer>false</organismsDiffer>
    <experiments>3</experiments>
</comment>
<comment type="interaction">
    <interactant intactId="EBI-740098">
        <id>P36406</id>
    </interactant>
    <interactant intactId="EBI-473886">
        <id>O00291</id>
        <label>HIP1</label>
    </interactant>
    <organismsDiffer>false</organismsDiffer>
    <experiments>3</experiments>
</comment>
<comment type="interaction">
    <interactant intactId="EBI-740098">
        <id>P36406</id>
    </interactant>
    <interactant intactId="EBI-3893317">
        <id>P09067</id>
        <label>HOXB5</label>
    </interactant>
    <organismsDiffer>false</organismsDiffer>
    <experiments>6</experiments>
</comment>
<comment type="interaction">
    <interactant intactId="EBI-740098">
        <id>P36406</id>
    </interactant>
    <interactant intactId="EBI-350145">
        <id>P01112</id>
        <label>HRAS</label>
    </interactant>
    <organismsDiffer>false</organismsDiffer>
    <experiments>3</experiments>
</comment>
<comment type="interaction">
    <interactant intactId="EBI-740098">
        <id>P36406</id>
    </interactant>
    <interactant intactId="EBI-352682">
        <id>P04792</id>
        <label>HSPB1</label>
    </interactant>
    <organismsDiffer>false</organismsDiffer>
    <experiments>3</experiments>
</comment>
<comment type="interaction">
    <interactant intactId="EBI-740098">
        <id>P36406</id>
    </interactant>
    <interactant intactId="EBI-739361">
        <id>Q9UBY9</id>
        <label>HSPB7</label>
    </interactant>
    <organismsDiffer>false</organismsDiffer>
    <experiments>3</experiments>
</comment>
<comment type="interaction">
    <interactant intactId="EBI-740098">
        <id>P36406</id>
    </interactant>
    <interactant intactId="EBI-17178971">
        <id>Q14005-2</id>
        <label>IL16</label>
    </interactant>
    <organismsDiffer>false</organismsDiffer>
    <experiments>3</experiments>
</comment>
<comment type="interaction">
    <interactant intactId="EBI-740098">
        <id>P36406</id>
    </interactant>
    <interactant intactId="EBI-10220600">
        <id>Q8NA54</id>
        <label>IQUB</label>
    </interactant>
    <organismsDiffer>false</organismsDiffer>
    <experiments>7</experiments>
</comment>
<comment type="interaction">
    <interactant intactId="EBI-740098">
        <id>P36406</id>
    </interactant>
    <interactant intactId="EBI-2510602">
        <id>Q15040</id>
        <label>JOSD1</label>
    </interactant>
    <organismsDiffer>false</organismsDiffer>
    <experiments>3</experiments>
</comment>
<comment type="interaction">
    <interactant intactId="EBI-740098">
        <id>P36406</id>
    </interactant>
    <interactant intactId="EBI-17181882">
        <id>O75564-2</id>
        <label>JRK</label>
    </interactant>
    <organismsDiffer>false</organismsDiffer>
    <experiments>3</experiments>
</comment>
<comment type="interaction">
    <interactant intactId="EBI-740098">
        <id>P36406</id>
    </interactant>
    <interactant intactId="EBI-399080">
        <id>Q92993</id>
        <label>KAT5</label>
    </interactant>
    <organismsDiffer>false</organismsDiffer>
    <experiments>3</experiments>
</comment>
<comment type="interaction">
    <interactant intactId="EBI-740098">
        <id>P36406</id>
    </interactant>
    <interactant intactId="EBI-10975473">
        <id>O60333-2</id>
        <label>KIF1B</label>
    </interactant>
    <organismsDiffer>false</organismsDiffer>
    <experiments>3</experiments>
</comment>
<comment type="interaction">
    <interactant intactId="EBI-740098">
        <id>P36406</id>
    </interactant>
    <interactant intactId="EBI-2125614">
        <id>Q9BVG8</id>
        <label>KIFC3</label>
    </interactant>
    <organismsDiffer>false</organismsDiffer>
    <experiments>3</experiments>
</comment>
<comment type="interaction">
    <interactant intactId="EBI-740098">
        <id>P36406</id>
    </interactant>
    <interactant intactId="EBI-739890">
        <id>Q9P2K6</id>
        <label>KLHL42</label>
    </interactant>
    <organismsDiffer>false</organismsDiffer>
    <experiments>6</experiments>
</comment>
<comment type="interaction">
    <interactant intactId="EBI-740098">
        <id>P36406</id>
    </interactant>
    <interactant intactId="EBI-702198">
        <id>P02538</id>
        <label>KRT6A</label>
    </interactant>
    <organismsDiffer>false</organismsDiffer>
    <experiments>8</experiments>
</comment>
<comment type="interaction">
    <interactant intactId="EBI-740098">
        <id>P36406</id>
    </interactant>
    <interactant intactId="EBI-2949715">
        <id>O95678</id>
        <label>KRT75</label>
    </interactant>
    <organismsDiffer>false</organismsDiffer>
    <experiments>3</experiments>
</comment>
<comment type="interaction">
    <interactant intactId="EBI-740098">
        <id>P36406</id>
    </interactant>
    <interactant intactId="EBI-2952745">
        <id>Q01546</id>
        <label>KRT76</label>
    </interactant>
    <organismsDiffer>false</organismsDiffer>
    <experiments>3</experiments>
</comment>
<comment type="interaction">
    <interactant intactId="EBI-740098">
        <id>P36406</id>
    </interactant>
    <interactant intactId="EBI-1052105">
        <id>Q14657</id>
        <label>LAGE3</label>
    </interactant>
    <organismsDiffer>false</organismsDiffer>
    <experiments>3</experiments>
</comment>
<comment type="interaction">
    <interactant intactId="EBI-740098">
        <id>P36406</id>
    </interactant>
    <interactant intactId="EBI-21591415">
        <id>P13473-2</id>
        <label>LAMP2</label>
    </interactant>
    <organismsDiffer>false</organismsDiffer>
    <experiments>3</experiments>
</comment>
<comment type="interaction">
    <interactant intactId="EBI-740098">
        <id>P36406</id>
    </interactant>
    <interactant intactId="EBI-726510">
        <id>Q96BZ8</id>
        <label>LENG1</label>
    </interactant>
    <organismsDiffer>false</organismsDiffer>
    <experiments>3</experiments>
</comment>
<comment type="interaction">
    <interactant intactId="EBI-740098">
        <id>P36406</id>
    </interactant>
    <interactant intactId="EBI-10274069">
        <id>Q8TCE9</id>
        <label>LGALS14</label>
    </interactant>
    <organismsDiffer>false</organismsDiffer>
    <experiments>3</experiments>
</comment>
<comment type="interaction">
    <interactant intactId="EBI-740098">
        <id>P36406</id>
    </interactant>
    <interactant intactId="EBI-740058">
        <id>O00214</id>
        <label>LGALS8</label>
    </interactant>
    <organismsDiffer>false</organismsDiffer>
    <experiments>4</experiments>
</comment>
<comment type="interaction">
    <interactant intactId="EBI-740098">
        <id>P36406</id>
    </interactant>
    <interactant intactId="EBI-10286106">
        <id>Q96FQ7</id>
        <label>LINC00526</label>
    </interactant>
    <organismsDiffer>false</organismsDiffer>
    <experiments>3</experiments>
</comment>
<comment type="interaction">
    <interactant intactId="EBI-740098">
        <id>P36406</id>
    </interactant>
    <interactant intactId="EBI-739696">
        <id>P25791</id>
        <label>LMO2</label>
    </interactant>
    <organismsDiffer>false</organismsDiffer>
    <experiments>3</experiments>
</comment>
<comment type="interaction">
    <interactant intactId="EBI-740098">
        <id>P36406</id>
    </interactant>
    <interactant intactId="EBI-11742507">
        <id>Q8TAP4-4</id>
        <label>LMO3</label>
    </interactant>
    <organismsDiffer>false</organismsDiffer>
    <experiments>3</experiments>
</comment>
<comment type="interaction">
    <interactant intactId="EBI-740098">
        <id>P36406</id>
    </interactant>
    <interactant intactId="EBI-739832">
        <id>Q8TBB1</id>
        <label>LNX1</label>
    </interactant>
    <organismsDiffer>false</organismsDiffer>
    <experiments>3</experiments>
</comment>
<comment type="interaction">
    <interactant intactId="EBI-740098">
        <id>P36406</id>
    </interactant>
    <interactant intactId="EBI-10269566">
        <id>Q8NDC4</id>
        <label>MORN4</label>
    </interactant>
    <organismsDiffer>false</organismsDiffer>
    <experiments>6</experiments>
</comment>
<comment type="interaction">
    <interactant intactId="EBI-740098">
        <id>P36406</id>
    </interactant>
    <interactant intactId="EBI-721368">
        <id>Q9BYD3</id>
        <label>MRPL4</label>
    </interactant>
    <organismsDiffer>false</organismsDiffer>
    <experiments>3</experiments>
</comment>
<comment type="interaction">
    <interactant intactId="EBI-740098">
        <id>P36406</id>
    </interactant>
    <interactant intactId="EBI-2514313">
        <id>Q9BRJ2</id>
        <label>MRPL45</label>
    </interactant>
    <organismsDiffer>false</organismsDiffer>
    <experiments>3</experiments>
</comment>
<comment type="interaction">
    <interactant intactId="EBI-740098">
        <id>P36406</id>
    </interactant>
    <interactant intactId="EBI-10699187">
        <id>Q8IXL7-2</id>
        <label>MSRB3</label>
    </interactant>
    <organismsDiffer>false</organismsDiffer>
    <experiments>3</experiments>
</comment>
<comment type="interaction">
    <interactant intactId="EBI-740098">
        <id>P36406</id>
    </interactant>
    <interactant intactId="EBI-10252703">
        <id>Q6P444</id>
        <label>MTFR2</label>
    </interactant>
    <organismsDiffer>false</organismsDiffer>
    <experiments>3</experiments>
</comment>
<comment type="interaction">
    <interactant intactId="EBI-740098">
        <id>P36406</id>
    </interactant>
    <interactant intactId="EBI-10318831">
        <id>Q9P2K5-2</id>
        <label>MYEF2</label>
    </interactant>
    <organismsDiffer>false</organismsDiffer>
    <experiments>3</experiments>
</comment>
<comment type="interaction">
    <interactant intactId="EBI-740098">
        <id>P36406</id>
    </interactant>
    <interactant intactId="EBI-12010196">
        <id>P52179-2</id>
        <label>MYOM1</label>
    </interactant>
    <organismsDiffer>false</organismsDiffer>
    <experiments>3</experiments>
</comment>
<comment type="interaction">
    <interactant intactId="EBI-740098">
        <id>P36406</id>
    </interactant>
    <interactant intactId="EBI-744402">
        <id>Q9NP98</id>
        <label>MYOZ1</label>
    </interactant>
    <organismsDiffer>false</organismsDiffer>
    <experiments>3</experiments>
</comment>
<comment type="interaction">
    <interactant intactId="EBI-740098">
        <id>P36406</id>
    </interactant>
    <interactant intactId="EBI-8641936">
        <id>Q15742</id>
        <label>NAB2</label>
    </interactant>
    <organismsDiffer>false</organismsDiffer>
    <experiments>3</experiments>
</comment>
<comment type="interaction">
    <interactant intactId="EBI-740098">
        <id>P36406</id>
    </interactant>
    <interactant intactId="EBI-11746523">
        <id>Q14511-2</id>
        <label>NEDD9</label>
    </interactant>
    <organismsDiffer>false</organismsDiffer>
    <experiments>3</experiments>
</comment>
<comment type="interaction">
    <interactant intactId="EBI-740098">
        <id>P36406</id>
    </interactant>
    <interactant intactId="EBI-740364">
        <id>Q9HC98</id>
        <label>NEK6</label>
    </interactant>
    <organismsDiffer>false</organismsDiffer>
    <experiments>4</experiments>
</comment>
<comment type="interaction">
    <interactant intactId="EBI-740098">
        <id>P36406</id>
    </interactant>
    <interactant intactId="EBI-725252">
        <id>Q9UMS0</id>
        <label>NFU1</label>
    </interactant>
    <organismsDiffer>false</organismsDiffer>
    <experiments>3</experiments>
</comment>
<comment type="interaction">
    <interactant intactId="EBI-740098">
        <id>P36406</id>
    </interactant>
    <interactant intactId="EBI-12025760">
        <id>Q86UR1-2</id>
        <label>NOXA1</label>
    </interactant>
    <organismsDiffer>false</organismsDiffer>
    <experiments>3</experiments>
</comment>
<comment type="interaction">
    <interactant intactId="EBI-740098">
        <id>P36406</id>
    </interactant>
    <interactant intactId="EBI-741158">
        <id>Q96HA8</id>
        <label>NTAQ1</label>
    </interactant>
    <organismsDiffer>false</organismsDiffer>
    <experiments>3</experiments>
</comment>
<comment type="interaction">
    <interactant intactId="EBI-740098">
        <id>P36406</id>
    </interactant>
    <interactant intactId="EBI-355720">
        <id>O43809</id>
        <label>NUDT21</label>
    </interactant>
    <organismsDiffer>false</organismsDiffer>
    <experiments>3</experiments>
</comment>
<comment type="interaction">
    <interactant intactId="EBI-740098">
        <id>P36406</id>
    </interactant>
    <interactant intactId="EBI-752122">
        <id>Q9NPJ8</id>
        <label>NXT2</label>
    </interactant>
    <organismsDiffer>false</organismsDiffer>
    <experiments>3</experiments>
</comment>
<comment type="interaction">
    <interactant intactId="EBI-740098">
        <id>P36406</id>
    </interactant>
    <interactant intactId="EBI-530034">
        <id>O43189</id>
        <label>PHF1</label>
    </interactant>
    <organismsDiffer>false</organismsDiffer>
    <experiments>4</experiments>
</comment>
<comment type="interaction">
    <interactant intactId="EBI-740098">
        <id>P36406</id>
    </interactant>
    <interactant intactId="EBI-348555">
        <id>O75928</id>
        <label>PIAS2</label>
    </interactant>
    <organismsDiffer>false</organismsDiffer>
    <experiments>3</experiments>
</comment>
<comment type="interaction">
    <interactant intactId="EBI-740098">
        <id>P36406</id>
    </interactant>
    <interactant intactId="EBI-346930">
        <id>O00459</id>
        <label>PIK3R2</label>
    </interactant>
    <organismsDiffer>false</organismsDiffer>
    <experiments>3</experiments>
</comment>
<comment type="interaction">
    <interactant intactId="EBI-740098">
        <id>P36406</id>
    </interactant>
    <interactant intactId="EBI-748265">
        <id>P78337</id>
        <label>PITX1</label>
    </interactant>
    <organismsDiffer>false</organismsDiffer>
    <experiments>4</experiments>
</comment>
<comment type="interaction">
    <interactant intactId="EBI-740098">
        <id>P36406</id>
    </interactant>
    <interactant intactId="EBI-726447">
        <id>Q99569</id>
        <label>PKP4</label>
    </interactant>
    <organismsDiffer>false</organismsDiffer>
    <experiments>3</experiments>
</comment>
<comment type="interaction">
    <interactant intactId="EBI-740098">
        <id>P36406</id>
    </interactant>
    <interactant intactId="EBI-4401947">
        <id>Q9HB19</id>
        <label>PLEKHA2</label>
    </interactant>
    <organismsDiffer>false</organismsDiffer>
    <experiments>3</experiments>
</comment>
<comment type="interaction">
    <interactant intactId="EBI-740098">
        <id>P36406</id>
    </interactant>
    <interactant intactId="EBI-10320765">
        <id>Q9UGP5-2</id>
        <label>POLL</label>
    </interactant>
    <organismsDiffer>false</organismsDiffer>
    <experiments>3</experiments>
</comment>
<comment type="interaction">
    <interactant intactId="EBI-740098">
        <id>P36406</id>
    </interactant>
    <interactant intactId="EBI-11956563">
        <id>Q96HA1-2</id>
        <label>POM121</label>
    </interactant>
    <organismsDiffer>false</organismsDiffer>
    <experiments>3</experiments>
</comment>
<comment type="interaction">
    <interactant intactId="EBI-740098">
        <id>P36406</id>
    </interactant>
    <interactant intactId="EBI-7705988">
        <id>Q13356</id>
        <label>PPIL2</label>
    </interactant>
    <organismsDiffer>false</organismsDiffer>
    <experiments>3</experiments>
</comment>
<comment type="interaction">
    <interactant intactId="EBI-740098">
        <id>P36406</id>
    </interactant>
    <interactant intactId="EBI-2815482">
        <id>Q5SWA1</id>
        <label>PPP1R15B</label>
    </interactant>
    <organismsDiffer>false</organismsDiffer>
    <experiments>3</experiments>
</comment>
<comment type="interaction">
    <interactant intactId="EBI-740098">
        <id>P36406</id>
    </interactant>
    <interactant intactId="EBI-2557469">
        <id>Q6NYC8</id>
        <label>PPP1R18</label>
    </interactant>
    <organismsDiffer>false</organismsDiffer>
    <experiments>3</experiments>
</comment>
<comment type="interaction">
    <interactant intactId="EBI-740098">
        <id>P36406</id>
    </interactant>
    <interactant intactId="EBI-2798416">
        <id>Q99633</id>
        <label>PRPF18</label>
    </interactant>
    <organismsDiffer>false</organismsDiffer>
    <experiments>3</experiments>
</comment>
<comment type="interaction">
    <interactant intactId="EBI-740098">
        <id>P36406</id>
    </interactant>
    <interactant intactId="EBI-1567797">
        <id>Q8WWY3</id>
        <label>PRPF31</label>
    </interactant>
    <organismsDiffer>false</organismsDiffer>
    <experiments>3</experiments>
</comment>
<comment type="interaction">
    <interactant intactId="EBI-740098">
        <id>P36406</id>
    </interactant>
    <interactant intactId="EBI-359352">
        <id>P25786</id>
        <label>PSMA1</label>
    </interactant>
    <organismsDiffer>false</organismsDiffer>
    <experiments>5</experiments>
</comment>
<comment type="interaction">
    <interactant intactId="EBI-740098">
        <id>P36406</id>
    </interactant>
    <interactant intactId="EBI-372273">
        <id>P20618</id>
        <label>PSMB1</label>
    </interactant>
    <organismsDiffer>false</organismsDiffer>
    <experiments>3</experiments>
</comment>
<comment type="interaction">
    <interactant intactId="EBI-740098">
        <id>P36406</id>
    </interactant>
    <interactant intactId="EBI-744023">
        <id>Q9BTL3</id>
        <label>RAMAC</label>
    </interactant>
    <organismsDiffer>false</organismsDiffer>
    <experiments>6</experiments>
</comment>
<comment type="interaction">
    <interactant intactId="EBI-740098">
        <id>P36406</id>
    </interactant>
    <interactant intactId="EBI-286642">
        <id>P62826</id>
        <label>RAN</label>
    </interactant>
    <organismsDiffer>false</organismsDiffer>
    <experiments>3</experiments>
</comment>
<comment type="interaction">
    <interactant intactId="EBI-740098">
        <id>P36406</id>
    </interactant>
    <interactant intactId="EBI-9091952">
        <id>Q9UKA8</id>
        <label>RCAN3</label>
    </interactant>
    <organismsDiffer>false</organismsDiffer>
    <experiments>3</experiments>
</comment>
<comment type="interaction">
    <interactant intactId="EBI-740098">
        <id>P36406</id>
    </interactant>
    <interactant intactId="EBI-10265323">
        <id>Q8N443</id>
        <label>RIBC1</label>
    </interactant>
    <organismsDiffer>false</organismsDiffer>
    <experiments>3</experiments>
</comment>
<comment type="interaction">
    <interactant intactId="EBI-740098">
        <id>P36406</id>
    </interactant>
    <interactant intactId="EBI-366017">
        <id>Q13671</id>
        <label>RIN1</label>
    </interactant>
    <organismsDiffer>false</organismsDiffer>
    <experiments>3</experiments>
</comment>
<comment type="interaction">
    <interactant intactId="EBI-740098">
        <id>P36406</id>
    </interactant>
    <interactant intactId="EBI-10248548">
        <id>Q63HN8-6</id>
        <label>RNF213</label>
    </interactant>
    <organismsDiffer>false</organismsDiffer>
    <experiments>3</experiments>
</comment>
<comment type="interaction">
    <interactant intactId="EBI-740098">
        <id>P36406</id>
    </interactant>
    <interactant intactId="EBI-16428950">
        <id>A0A0S2Z4G9</id>
        <label>RNF6</label>
    </interactant>
    <organismsDiffer>false</organismsDiffer>
    <experiments>3</experiments>
</comment>
<comment type="interaction">
    <interactant intactId="EBI-740098">
        <id>P36406</id>
    </interactant>
    <interactant intactId="EBI-10256202">
        <id>Q7L4I2-2</id>
        <label>RSRC2</label>
    </interactant>
    <organismsDiffer>false</organismsDiffer>
    <experiments>3</experiments>
</comment>
<comment type="interaction">
    <interactant intactId="EBI-740098">
        <id>P36406</id>
    </interactant>
    <interactant intactId="EBI-10217913">
        <id>Q14D33</id>
        <label>RTP5</label>
    </interactant>
    <organismsDiffer>false</organismsDiffer>
    <experiments>3</experiments>
</comment>
<comment type="interaction">
    <interactant intactId="EBI-740098">
        <id>P36406</id>
    </interactant>
    <interactant intactId="EBI-12192715">
        <id>Q96T51-2</id>
        <label>RUFY1</label>
    </interactant>
    <organismsDiffer>false</organismsDiffer>
    <experiments>3</experiments>
</comment>
<comment type="interaction">
    <interactant intactId="EBI-740098">
        <id>P36406</id>
    </interactant>
    <interactant intactId="EBI-748391">
        <id>Q9BWG6</id>
        <label>SCNM1</label>
    </interactant>
    <organismsDiffer>false</organismsDiffer>
    <experiments>3</experiments>
</comment>
<comment type="interaction">
    <interactant intactId="EBI-740098">
        <id>P36406</id>
    </interactant>
    <interactant intactId="EBI-747035">
        <id>Q9H788</id>
        <label>SH2D4A</label>
    </interactant>
    <organismsDiffer>false</organismsDiffer>
    <experiments>3</experiments>
</comment>
<comment type="interaction">
    <interactant intactId="EBI-740098">
        <id>P36406</id>
    </interactant>
    <interactant intactId="EBI-10308083">
        <id>Q9H788-2</id>
        <label>SH2D4A</label>
    </interactant>
    <organismsDiffer>false</organismsDiffer>
    <experiments>3</experiments>
</comment>
<comment type="interaction">
    <interactant intactId="EBI-740098">
        <id>P36406</id>
    </interactant>
    <interactant intactId="EBI-747107">
        <id>Q8IUQ4</id>
        <label>SIAH1</label>
    </interactant>
    <organismsDiffer>false</organismsDiffer>
    <experiments>3</experiments>
</comment>
<comment type="interaction">
    <interactant intactId="EBI-740098">
        <id>P36406</id>
    </interactant>
    <interactant intactId="EBI-356254">
        <id>P12236</id>
        <label>SLC25A6</label>
    </interactant>
    <organismsDiffer>false</organismsDiffer>
    <experiments>3</experiments>
</comment>
<comment type="interaction">
    <interactant intactId="EBI-740098">
        <id>P36406</id>
    </interactant>
    <interactant intactId="EBI-2872322">
        <id>Q9H0W8</id>
        <label>SMG9</label>
    </interactant>
    <organismsDiffer>false</organismsDiffer>
    <experiments>6</experiments>
</comment>
<comment type="interaction">
    <interactant intactId="EBI-740098">
        <id>P36406</id>
    </interactant>
    <interactant intactId="EBI-1045459">
        <id>O95863</id>
        <label>SNAI1</label>
    </interactant>
    <organismsDiffer>false</organismsDiffer>
    <experiments>7</experiments>
</comment>
<comment type="interaction">
    <interactant intactId="EBI-740098">
        <id>P36406</id>
    </interactant>
    <interactant intactId="EBI-9876238">
        <id>O43623</id>
        <label>SNAI2</label>
    </interactant>
    <organismsDiffer>false</organismsDiffer>
    <experiments>3</experiments>
</comment>
<comment type="interaction">
    <interactant intactId="EBI-740098">
        <id>P36406</id>
    </interactant>
    <interactant intactId="EBI-372475">
        <id>P14678-2</id>
        <label>SNRPB</label>
    </interactant>
    <organismsDiffer>false</organismsDiffer>
    <experiments>3</experiments>
</comment>
<comment type="interaction">
    <interactant intactId="EBI-740098">
        <id>P36406</id>
    </interactant>
    <interactant intactId="EBI-1053651">
        <id>P08579</id>
        <label>SNRPB2</label>
    </interactant>
    <organismsDiffer>false</organismsDiffer>
    <experiments>3</experiments>
</comment>
<comment type="interaction">
    <interactant intactId="EBI-740098">
        <id>P36406</id>
    </interactant>
    <interactant intactId="EBI-632715">
        <id>Q13573</id>
        <label>SNW1</label>
    </interactant>
    <organismsDiffer>false</organismsDiffer>
    <experiments>3</experiments>
</comment>
<comment type="interaction">
    <interactant intactId="EBI-740098">
        <id>P36406</id>
    </interactant>
    <interactant intactId="EBI-741237">
        <id>O60504</id>
        <label>SORBS3</label>
    </interactant>
    <organismsDiffer>false</organismsDiffer>
    <experiments>6</experiments>
</comment>
<comment type="interaction">
    <interactant intactId="EBI-740098">
        <id>P36406</id>
    </interactant>
    <interactant intactId="EBI-742688">
        <id>Q9NZD8</id>
        <label>SPG21</label>
    </interactant>
    <organismsDiffer>false</organismsDiffer>
    <experiments>3</experiments>
</comment>
<comment type="interaction">
    <interactant intactId="EBI-740098">
        <id>P36406</id>
    </interactant>
    <interactant intactId="EBI-10176124">
        <id>B7ZLI8</id>
        <label>STK19</label>
    </interactant>
    <organismsDiffer>false</organismsDiffer>
    <experiments>3</experiments>
</comment>
<comment type="interaction">
    <interactant intactId="EBI-740098">
        <id>P36406</id>
    </interactant>
    <interactant intactId="EBI-10175576">
        <id>G2XKQ0</id>
        <label>SUMO1P1</label>
    </interactant>
    <organismsDiffer>false</organismsDiffer>
    <experiments>3</experiments>
</comment>
<comment type="interaction">
    <interactant intactId="EBI-740098">
        <id>P36406</id>
    </interactant>
    <interactant intactId="EBI-747797">
        <id>Q9BSH4</id>
        <label>TACO1</label>
    </interactant>
    <organismsDiffer>false</organismsDiffer>
    <experiments>3</experiments>
</comment>
<comment type="interaction">
    <interactant intactId="EBI-740098">
        <id>P36406</id>
    </interactant>
    <interactant intactId="EBI-372899">
        <id>Q13148</id>
        <label>TARDBP</label>
    </interactant>
    <organismsDiffer>false</organismsDiffer>
    <experiments>3</experiments>
</comment>
<comment type="interaction">
    <interactant intactId="EBI-740098">
        <id>P36406</id>
    </interactant>
    <interactant intactId="EBI-10172380">
        <id>Q5VWN6-2</id>
        <label>TASOR2</label>
    </interactant>
    <organismsDiffer>false</organismsDiffer>
    <experiments>3</experiments>
</comment>
<comment type="interaction">
    <interactant intactId="EBI-740098">
        <id>P36406</id>
    </interactant>
    <interactant intactId="EBI-8787464">
        <id>Q9NU19</id>
        <label>TBC1D22B</label>
    </interactant>
    <organismsDiffer>false</organismsDiffer>
    <experiments>8</experiments>
</comment>
<comment type="interaction">
    <interactant intactId="EBI-740098">
        <id>P36406</id>
    </interactant>
    <interactant intactId="EBI-710310">
        <id>Q15560</id>
        <label>TCEA2</label>
    </interactant>
    <organismsDiffer>false</organismsDiffer>
    <experiments>3</experiments>
</comment>
<comment type="interaction">
    <interactant intactId="EBI-740098">
        <id>P36406</id>
    </interactant>
    <interactant intactId="EBI-11955057">
        <id>Q8N8B7-2</id>
        <label>TCEANC</label>
    </interactant>
    <organismsDiffer>false</organismsDiffer>
    <experiments>3</experiments>
</comment>
<comment type="interaction">
    <interactant intactId="EBI-740098">
        <id>P36406</id>
    </interactant>
    <interactant intactId="EBI-11139477">
        <id>Q96N21</id>
        <label>TEPSIN</label>
    </interactant>
    <organismsDiffer>false</organismsDiffer>
    <experiments>3</experiments>
</comment>
<comment type="interaction">
    <interactant intactId="EBI-740098">
        <id>P36406</id>
    </interactant>
    <interactant intactId="EBI-10226570">
        <id>Q0P5Q0</id>
        <label>TMSB4X</label>
    </interactant>
    <organismsDiffer>false</organismsDiffer>
    <experiments>3</experiments>
</comment>
<comment type="interaction">
    <interactant intactId="EBI-740098">
        <id>P36406</id>
    </interactant>
    <interactant intactId="EBI-527670">
        <id>P21580</id>
        <label>TNFAIP3</label>
    </interactant>
    <organismsDiffer>false</organismsDiffer>
    <experiments>6</experiments>
</comment>
<comment type="interaction">
    <interactant intactId="EBI-740098">
        <id>P36406</id>
    </interactant>
    <interactant intactId="EBI-359224">
        <id>Q13077</id>
        <label>TRAF1</label>
    </interactant>
    <organismsDiffer>false</organismsDiffer>
    <experiments>3</experiments>
</comment>
<comment type="interaction">
    <interactant intactId="EBI-740098">
        <id>P36406</id>
    </interactant>
    <interactant intactId="EBI-740098">
        <id>P36406</id>
        <label>TRIM23</label>
    </interactant>
    <organismsDiffer>false</organismsDiffer>
    <experiments>7</experiments>
</comment>
<comment type="interaction">
    <interactant intactId="EBI-740098">
        <id>P36406</id>
    </interactant>
    <interactant intactId="EBI-10226710">
        <id>Q0P6H7</id>
        <label>TRIM29</label>
    </interactant>
    <organismsDiffer>false</organismsDiffer>
    <experiments>3</experiments>
</comment>
<comment type="interaction">
    <interactant intactId="EBI-740098">
        <id>P36406</id>
    </interactant>
    <interactant intactId="EBI-702370">
        <id>Q14134</id>
        <label>TRIM29</label>
    </interactant>
    <organismsDiffer>false</organismsDiffer>
    <experiments>4</experiments>
</comment>
<comment type="interaction">
    <interactant intactId="EBI-740098">
        <id>P36406</id>
    </interactant>
    <interactant intactId="EBI-5235829">
        <id>Q8IWZ5</id>
        <label>TRIM42</label>
    </interactant>
    <organismsDiffer>false</organismsDiffer>
    <experiments>3</experiments>
</comment>
<comment type="interaction">
    <interactant intactId="EBI-740098">
        <id>P36406</id>
    </interactant>
    <interactant intactId="EBI-2341179">
        <id>Q9BYV6</id>
        <label>TRIM55</label>
    </interactant>
    <organismsDiffer>false</organismsDiffer>
    <experiments>2</experiments>
</comment>
<comment type="interaction">
    <interactant intactId="EBI-740098">
        <id>P36406</id>
    </interactant>
    <interactant intactId="EBI-2349743">
        <id>Q12815</id>
        <label>TROAP</label>
    </interactant>
    <organismsDiffer>false</organismsDiffer>
    <experiments>5</experiments>
</comment>
<comment type="interaction">
    <interactant intactId="EBI-740098">
        <id>P36406</id>
    </interactant>
    <interactant intactId="EBI-2559824">
        <id>Q7Z6J9</id>
        <label>TSEN54</label>
    </interactant>
    <organismsDiffer>false</organismsDiffer>
    <experiments>3</experiments>
</comment>
<comment type="interaction">
    <interactant intactId="EBI-740098">
        <id>P36406</id>
    </interactant>
    <interactant intactId="EBI-9053916">
        <id>Q63HK5</id>
        <label>TSHZ3</label>
    </interactant>
    <organismsDiffer>false</organismsDiffer>
    <experiments>3</experiments>
</comment>
<comment type="interaction">
    <interactant intactId="EBI-740098">
        <id>P36406</id>
    </interactant>
    <interactant intactId="EBI-2825190">
        <id>Q86UY0</id>
        <label>TXNDC5</label>
    </interactant>
    <organismsDiffer>false</organismsDiffer>
    <experiments>3</experiments>
</comment>
<comment type="interaction">
    <interactant intactId="EBI-740098">
        <id>P36406</id>
    </interactant>
    <interactant intactId="EBI-10180829">
        <id>Q7KZS0</id>
        <label>UBE2I</label>
    </interactant>
    <organismsDiffer>false</organismsDiffer>
    <experiments>3</experiments>
</comment>
<comment type="interaction">
    <interactant intactId="EBI-740098">
        <id>P36406</id>
    </interactant>
    <interactant intactId="EBI-741480">
        <id>Q9UMX0</id>
        <label>UBQLN1</label>
    </interactant>
    <organismsDiffer>false</organismsDiffer>
    <experiments>6</experiments>
</comment>
<comment type="interaction">
    <interactant intactId="EBI-740098">
        <id>P36406</id>
    </interactant>
    <interactant intactId="EBI-743272">
        <id>O75604</id>
        <label>USP2</label>
    </interactant>
    <organismsDiffer>false</organismsDiffer>
    <experiments>3</experiments>
</comment>
<comment type="interaction">
    <interactant intactId="EBI-740098">
        <id>P36406</id>
    </interactant>
    <interactant intactId="EBI-2511991">
        <id>Q9Y2K6</id>
        <label>USP20</label>
    </interactant>
    <organismsDiffer>false</organismsDiffer>
    <experiments>3</experiments>
</comment>
<comment type="interaction">
    <interactant intactId="EBI-740098">
        <id>P36406</id>
    </interactant>
    <interactant intactId="EBI-5457544">
        <id>Q9BRU9</id>
        <label>UTP23</label>
    </interactant>
    <organismsDiffer>false</organismsDiffer>
    <experiments>3</experiments>
</comment>
<comment type="interaction">
    <interactant intactId="EBI-740098">
        <id>P36406</id>
    </interactant>
    <interactant intactId="EBI-11983165">
        <id>Q99990</id>
        <label>VGLL1</label>
    </interactant>
    <organismsDiffer>false</organismsDiffer>
    <experiments>3</experiments>
</comment>
<comment type="interaction">
    <interactant intactId="EBI-740098">
        <id>P36406</id>
    </interactant>
    <interactant intactId="EBI-744560">
        <id>Q64LD2</id>
        <label>WDR25</label>
    </interactant>
    <organismsDiffer>false</organismsDiffer>
    <experiments>3</experiments>
</comment>
<comment type="interaction">
    <interactant intactId="EBI-740098">
        <id>P36406</id>
    </interactant>
    <interactant intactId="EBI-720609">
        <id>O76024</id>
        <label>WFS1</label>
    </interactant>
    <organismsDiffer>false</organismsDiffer>
    <experiments>3</experiments>
</comment>
<comment type="interaction">
    <interactant intactId="EBI-740098">
        <id>P36406</id>
    </interactant>
    <interactant intactId="EBI-711925">
        <id>Q05516</id>
        <label>ZBTB16</label>
    </interactant>
    <organismsDiffer>false</organismsDiffer>
    <experiments>3</experiments>
</comment>
<comment type="interaction">
    <interactant intactId="EBI-740098">
        <id>P36406</id>
    </interactant>
    <interactant intactId="EBI-2564133">
        <id>Q9P1Z0</id>
        <label>ZBTB4</label>
    </interactant>
    <organismsDiffer>false</organismsDiffer>
    <experiments>3</experiments>
</comment>
<comment type="interaction">
    <interactant intactId="EBI-740098">
        <id>P36406</id>
    </interactant>
    <interactant intactId="EBI-740767">
        <id>Q53FD0</id>
        <label>ZC2HC1C</label>
    </interactant>
    <organismsDiffer>false</organismsDiffer>
    <experiments>3</experiments>
</comment>
<comment type="interaction">
    <interactant intactId="EBI-740098">
        <id>P36406</id>
    </interactant>
    <interactant intactId="EBI-14104088">
        <id>Q53FD0-2</id>
        <label>ZC2HC1C</label>
    </interactant>
    <organismsDiffer>false</organismsDiffer>
    <experiments>3</experiments>
</comment>
<comment type="interaction">
    <interactant intactId="EBI-740098">
        <id>P36406</id>
    </interactant>
    <interactant intactId="EBI-3921109">
        <id>Q8N6M9</id>
        <label>ZFAND2A</label>
    </interactant>
    <organismsDiffer>false</organismsDiffer>
    <experiments>3</experiments>
</comment>
<comment type="interaction">
    <interactant intactId="EBI-740098">
        <id>P36406</id>
    </interactant>
    <interactant intactId="EBI-717634">
        <id>P17024</id>
        <label>ZNF20</label>
    </interactant>
    <organismsDiffer>false</organismsDiffer>
    <experiments>3</experiments>
</comment>
<comment type="interaction">
    <interactant intactId="EBI-740098">
        <id>P36406</id>
    </interactant>
    <interactant intactId="EBI-10177272">
        <id>P15622-3</id>
        <label>ZNF250</label>
    </interactant>
    <organismsDiffer>false</organismsDiffer>
    <experiments>3</experiments>
</comment>
<comment type="interaction">
    <interactant intactId="EBI-740098">
        <id>P36406</id>
    </interactant>
    <interactant intactId="EBI-347633">
        <id>Q9H9D4</id>
        <label>ZNF408</label>
    </interactant>
    <organismsDiffer>false</organismsDiffer>
    <experiments>3</experiments>
</comment>
<comment type="interaction">
    <interactant intactId="EBI-740098">
        <id>P36406</id>
    </interactant>
    <interactant intactId="EBI-740727">
        <id>Q8TAU3</id>
        <label>ZNF417</label>
    </interactant>
    <organismsDiffer>false</organismsDiffer>
    <experiments>3</experiments>
</comment>
<comment type="interaction">
    <interactant intactId="EBI-740098">
        <id>P36406</id>
    </interactant>
    <interactant intactId="EBI-17269964">
        <id>Q6S9Z5</id>
        <label>ZNF474</label>
    </interactant>
    <organismsDiffer>false</organismsDiffer>
    <experiments>3</experiments>
</comment>
<comment type="interaction">
    <interactant intactId="EBI-740098">
        <id>P36406</id>
    </interactant>
    <interactant intactId="EBI-10273713">
        <id>Q8TBZ8</id>
        <label>ZNF564</label>
    </interactant>
    <organismsDiffer>false</organismsDiffer>
    <experiments>6</experiments>
</comment>
<comment type="interaction">
    <interactant intactId="EBI-740098">
        <id>P36406</id>
    </interactant>
    <interactant intactId="EBI-745520">
        <id>Q9P0T4</id>
        <label>ZNF581</label>
    </interactant>
    <organismsDiffer>false</organismsDiffer>
    <experiments>8</experiments>
</comment>
<comment type="interaction">
    <interactant intactId="EBI-740098">
        <id>P36406</id>
    </interactant>
    <interactant intactId="EBI-6427977">
        <id>Q96SQ5</id>
        <label>ZNF587</label>
    </interactant>
    <organismsDiffer>false</organismsDiffer>
    <experiments>3</experiments>
</comment>
<comment type="interaction">
    <interactant intactId="EBI-740098">
        <id>P36406</id>
    </interactant>
    <interactant intactId="EBI-16429014">
        <id>A0A0S2Z5X4</id>
        <label>ZNF688</label>
    </interactant>
    <organismsDiffer>false</organismsDiffer>
    <experiments>3</experiments>
</comment>
<comment type="interaction">
    <interactant intactId="EBI-740098">
        <id>P36406</id>
    </interactant>
    <interactant intactId="EBI-16429989">
        <id>A0A0S2Z6P0</id>
        <label>ZNF688</label>
    </interactant>
    <organismsDiffer>false</organismsDiffer>
    <experiments>3</experiments>
</comment>
<comment type="interaction">
    <interactant intactId="EBI-740098">
        <id>P36406</id>
    </interactant>
    <interactant intactId="EBI-5667516">
        <id>Q9Y2P0</id>
        <label>ZNF835</label>
    </interactant>
    <organismsDiffer>false</organismsDiffer>
    <experiments>3</experiments>
</comment>
<comment type="interaction">
    <interactant intactId="EBI-740098">
        <id>P36406</id>
    </interactant>
    <interactant intactId="EBI-3957603">
        <id>P09022</id>
        <label>Hoxa1</label>
    </interactant>
    <organismsDiffer>true</organismsDiffer>
    <experiments>2</experiments>
</comment>
<comment type="subcellular location">
    <subcellularLocation>
        <location evidence="9">Cytoplasm</location>
    </subcellularLocation>
    <subcellularLocation>
        <location evidence="10">Endomembrane system</location>
    </subcellularLocation>
    <subcellularLocation>
        <location evidence="10">Golgi apparatus membrane</location>
    </subcellularLocation>
    <subcellularLocation>
        <location evidence="10">Lysosome membrane</location>
    </subcellularLocation>
    <text>Membrane-associated with the Golgi complex and lysosomal structures.</text>
</comment>
<comment type="alternative products">
    <event type="alternative splicing"/>
    <isoform>
        <id>P36406-1</id>
        <name>Alpha</name>
        <sequence type="displayed"/>
    </isoform>
    <isoform>
        <id>P36406-2</id>
        <name>Beta</name>
        <sequence type="described" ref="VSP_000296"/>
    </isoform>
    <isoform>
        <id>P36406-3</id>
        <name>Gamma</name>
        <sequence type="described" ref="VSP_000297"/>
    </isoform>
</comment>
<comment type="domain">
    <text evidence="8">The RING-type zinc finger domain is responsible for E3 ubiquitin ligase activity. This domain is catalytically active as a dimer.</text>
</comment>
<comment type="similarity">
    <text evidence="12">In the C-terminal section; belongs to the small GTPase superfamily. Arf family.</text>
</comment>
<dbReference type="EC" id="2.3.2.27"/>
<dbReference type="EMBL" id="L04510">
    <property type="protein sequence ID" value="AAA35940.1"/>
    <property type="molecule type" value="mRNA"/>
</dbReference>
<dbReference type="EMBL" id="AF230397">
    <property type="protein sequence ID" value="AAG50176.1"/>
    <property type="molecule type" value="mRNA"/>
</dbReference>
<dbReference type="EMBL" id="AF230398">
    <property type="protein sequence ID" value="AAG50177.1"/>
    <property type="molecule type" value="mRNA"/>
</dbReference>
<dbReference type="EMBL" id="AF230399">
    <property type="protein sequence ID" value="AAG50178.1"/>
    <property type="molecule type" value="mRNA"/>
</dbReference>
<dbReference type="EMBL" id="BC022510">
    <property type="protein sequence ID" value="AAH22510.1"/>
    <property type="molecule type" value="mRNA"/>
</dbReference>
<dbReference type="CCDS" id="CCDS3986.1">
    <molecule id="P36406-3"/>
</dbReference>
<dbReference type="CCDS" id="CCDS3987.1">
    <molecule id="P36406-1"/>
</dbReference>
<dbReference type="CCDS" id="CCDS43322.1">
    <molecule id="P36406-2"/>
</dbReference>
<dbReference type="PIR" id="A46054">
    <property type="entry name" value="A46054"/>
</dbReference>
<dbReference type="RefSeq" id="NP_001647.1">
    <molecule id="P36406-1"/>
    <property type="nucleotide sequence ID" value="NM_001656.4"/>
</dbReference>
<dbReference type="RefSeq" id="NP_150230.1">
    <molecule id="P36406-2"/>
    <property type="nucleotide sequence ID" value="NM_033227.3"/>
</dbReference>
<dbReference type="RefSeq" id="NP_150231.1">
    <molecule id="P36406-3"/>
    <property type="nucleotide sequence ID" value="NM_033228.3"/>
</dbReference>
<dbReference type="RefSeq" id="XP_016864933.1">
    <molecule id="P36406-2"/>
    <property type="nucleotide sequence ID" value="XM_017009444.3"/>
</dbReference>
<dbReference type="RefSeq" id="XP_054208503.1">
    <molecule id="P36406-1"/>
    <property type="nucleotide sequence ID" value="XM_054352528.1"/>
</dbReference>
<dbReference type="RefSeq" id="XP_054208504.1">
    <molecule id="P36406-1"/>
    <property type="nucleotide sequence ID" value="XM_054352529.1"/>
</dbReference>
<dbReference type="RefSeq" id="XP_054208505.1">
    <molecule id="P36406-1"/>
    <property type="nucleotide sequence ID" value="XM_054352530.1"/>
</dbReference>
<dbReference type="RefSeq" id="XP_054208507.1">
    <molecule id="P36406-2"/>
    <property type="nucleotide sequence ID" value="XM_054352532.1"/>
</dbReference>
<dbReference type="PDB" id="5VZV">
    <property type="method" value="X-ray"/>
    <property type="resolution" value="1.81 A"/>
    <property type="chains" value="A/B/C=1-123"/>
</dbReference>
<dbReference type="PDB" id="5VZW">
    <property type="method" value="X-ray"/>
    <property type="resolution" value="2.28 A"/>
    <property type="chains" value="F/G=1-123"/>
</dbReference>
<dbReference type="PDBsum" id="5VZV"/>
<dbReference type="PDBsum" id="5VZW"/>
<dbReference type="SMR" id="P36406"/>
<dbReference type="BioGRID" id="106868">
    <property type="interactions" value="364"/>
</dbReference>
<dbReference type="FunCoup" id="P36406">
    <property type="interactions" value="1193"/>
</dbReference>
<dbReference type="IntAct" id="P36406">
    <property type="interactions" value="236"/>
</dbReference>
<dbReference type="MINT" id="P36406"/>
<dbReference type="STRING" id="9606.ENSP00000231524"/>
<dbReference type="iPTMnet" id="P36406"/>
<dbReference type="PhosphoSitePlus" id="P36406"/>
<dbReference type="BioMuta" id="TRIM23"/>
<dbReference type="DMDM" id="543839"/>
<dbReference type="jPOST" id="P36406"/>
<dbReference type="MassIVE" id="P36406"/>
<dbReference type="PaxDb" id="9606-ENSP00000231524"/>
<dbReference type="PeptideAtlas" id="P36406"/>
<dbReference type="ProteomicsDB" id="55200">
    <molecule id="P36406-1"/>
</dbReference>
<dbReference type="ProteomicsDB" id="55201">
    <molecule id="P36406-2"/>
</dbReference>
<dbReference type="ProteomicsDB" id="55202">
    <molecule id="P36406-3"/>
</dbReference>
<dbReference type="Pumba" id="P36406"/>
<dbReference type="Antibodypedia" id="11584">
    <property type="antibodies" value="259 antibodies from 32 providers"/>
</dbReference>
<dbReference type="DNASU" id="373"/>
<dbReference type="Ensembl" id="ENST00000231524.14">
    <molecule id="P36406-1"/>
    <property type="protein sequence ID" value="ENSP00000231524.9"/>
    <property type="gene ID" value="ENSG00000113595.15"/>
</dbReference>
<dbReference type="Ensembl" id="ENST00000274327.11">
    <molecule id="P36406-3"/>
    <property type="protein sequence ID" value="ENSP00000274327.7"/>
    <property type="gene ID" value="ENSG00000113595.15"/>
</dbReference>
<dbReference type="Ensembl" id="ENST00000381018.7">
    <molecule id="P36406-2"/>
    <property type="protein sequence ID" value="ENSP00000370406.3"/>
    <property type="gene ID" value="ENSG00000113595.15"/>
</dbReference>
<dbReference type="GeneID" id="373"/>
<dbReference type="KEGG" id="hsa:373"/>
<dbReference type="MANE-Select" id="ENST00000231524.14">
    <property type="protein sequence ID" value="ENSP00000231524.9"/>
    <property type="RefSeq nucleotide sequence ID" value="NM_001656.4"/>
    <property type="RefSeq protein sequence ID" value="NP_001647.1"/>
</dbReference>
<dbReference type="UCSC" id="uc003jtw.4">
    <molecule id="P36406-1"/>
    <property type="organism name" value="human"/>
</dbReference>
<dbReference type="AGR" id="HGNC:660"/>
<dbReference type="CTD" id="373"/>
<dbReference type="DisGeNET" id="373"/>
<dbReference type="GeneCards" id="TRIM23"/>
<dbReference type="HGNC" id="HGNC:660">
    <property type="gene designation" value="TRIM23"/>
</dbReference>
<dbReference type="HPA" id="ENSG00000113595">
    <property type="expression patterns" value="Low tissue specificity"/>
</dbReference>
<dbReference type="MIM" id="601747">
    <property type="type" value="gene"/>
</dbReference>
<dbReference type="neXtProt" id="NX_P36406"/>
<dbReference type="OpenTargets" id="ENSG00000113595"/>
<dbReference type="PharmGKB" id="PA24943"/>
<dbReference type="VEuPathDB" id="HostDB:ENSG00000113595"/>
<dbReference type="eggNOG" id="KOG0070">
    <property type="taxonomic scope" value="Eukaryota"/>
</dbReference>
<dbReference type="eggNOG" id="KOG4185">
    <property type="taxonomic scope" value="Eukaryota"/>
</dbReference>
<dbReference type="GeneTree" id="ENSGT00940000158562"/>
<dbReference type="HOGENOM" id="CLU_033905_0_0_1"/>
<dbReference type="InParanoid" id="P36406"/>
<dbReference type="OMA" id="IQACDAK"/>
<dbReference type="OrthoDB" id="2011769at2759"/>
<dbReference type="PAN-GO" id="P36406">
    <property type="GO annotations" value="6 GO annotations based on evolutionary models"/>
</dbReference>
<dbReference type="PhylomeDB" id="P36406"/>
<dbReference type="TreeFam" id="TF320703"/>
<dbReference type="BRENDA" id="2.3.2.27">
    <property type="organism ID" value="2681"/>
</dbReference>
<dbReference type="PathwayCommons" id="P36406"/>
<dbReference type="SignaLink" id="P36406"/>
<dbReference type="SIGNOR" id="P36406"/>
<dbReference type="UniPathway" id="UPA00143"/>
<dbReference type="BioGRID-ORCS" id="373">
    <property type="hits" value="16 hits in 1199 CRISPR screens"/>
</dbReference>
<dbReference type="GeneWiki" id="TRIM23"/>
<dbReference type="GenomeRNAi" id="373"/>
<dbReference type="Pharos" id="P36406">
    <property type="development level" value="Tbio"/>
</dbReference>
<dbReference type="PRO" id="PR:P36406"/>
<dbReference type="Proteomes" id="UP000005640">
    <property type="component" value="Chromosome 5"/>
</dbReference>
<dbReference type="RNAct" id="P36406">
    <property type="molecule type" value="protein"/>
</dbReference>
<dbReference type="Bgee" id="ENSG00000113595">
    <property type="expression patterns" value="Expressed in cerebellar vermis and 189 other cell types or tissues"/>
</dbReference>
<dbReference type="ExpressionAtlas" id="P36406">
    <property type="expression patterns" value="baseline and differential"/>
</dbReference>
<dbReference type="GO" id="GO:0005737">
    <property type="term" value="C:cytoplasm"/>
    <property type="evidence" value="ECO:0000314"/>
    <property type="project" value="UniProt"/>
</dbReference>
<dbReference type="GO" id="GO:0000139">
    <property type="term" value="C:Golgi membrane"/>
    <property type="evidence" value="ECO:0000314"/>
    <property type="project" value="HGNC-UCL"/>
</dbReference>
<dbReference type="GO" id="GO:0005765">
    <property type="term" value="C:lysosomal membrane"/>
    <property type="evidence" value="ECO:0000314"/>
    <property type="project" value="HGNC-UCL"/>
</dbReference>
<dbReference type="GO" id="GO:0005634">
    <property type="term" value="C:nucleus"/>
    <property type="evidence" value="ECO:0007669"/>
    <property type="project" value="Ensembl"/>
</dbReference>
<dbReference type="GO" id="GO:0005886">
    <property type="term" value="C:plasma membrane"/>
    <property type="evidence" value="ECO:0000318"/>
    <property type="project" value="GO_Central"/>
</dbReference>
<dbReference type="GO" id="GO:0008047">
    <property type="term" value="F:enzyme activator activity"/>
    <property type="evidence" value="ECO:0000304"/>
    <property type="project" value="ProtInc"/>
</dbReference>
<dbReference type="GO" id="GO:0019003">
    <property type="term" value="F:GDP binding"/>
    <property type="evidence" value="ECO:0000314"/>
    <property type="project" value="HGNC-UCL"/>
</dbReference>
<dbReference type="GO" id="GO:0005525">
    <property type="term" value="F:GTP binding"/>
    <property type="evidence" value="ECO:0000314"/>
    <property type="project" value="HGNC-UCL"/>
</dbReference>
<dbReference type="GO" id="GO:0003924">
    <property type="term" value="F:GTPase activity"/>
    <property type="evidence" value="ECO:0000314"/>
    <property type="project" value="HGNC-UCL"/>
</dbReference>
<dbReference type="GO" id="GO:0042802">
    <property type="term" value="F:identical protein binding"/>
    <property type="evidence" value="ECO:0000353"/>
    <property type="project" value="IntAct"/>
</dbReference>
<dbReference type="GO" id="GO:0061630">
    <property type="term" value="F:ubiquitin protein ligase activity"/>
    <property type="evidence" value="ECO:0000314"/>
    <property type="project" value="UniProt"/>
</dbReference>
<dbReference type="GO" id="GO:0004842">
    <property type="term" value="F:ubiquitin-protein transferase activity"/>
    <property type="evidence" value="ECO:0000314"/>
    <property type="project" value="HGNC-UCL"/>
</dbReference>
<dbReference type="GO" id="GO:0008270">
    <property type="term" value="F:zinc ion binding"/>
    <property type="evidence" value="ECO:0007669"/>
    <property type="project" value="UniProtKB-KW"/>
</dbReference>
<dbReference type="GO" id="GO:0045087">
    <property type="term" value="P:innate immune response"/>
    <property type="evidence" value="ECO:0007669"/>
    <property type="project" value="UniProtKB-KW"/>
</dbReference>
<dbReference type="GO" id="GO:0006886">
    <property type="term" value="P:intracellular protein transport"/>
    <property type="evidence" value="ECO:0000318"/>
    <property type="project" value="GO_Central"/>
</dbReference>
<dbReference type="GO" id="GO:0010508">
    <property type="term" value="P:positive regulation of autophagy"/>
    <property type="evidence" value="ECO:0000314"/>
    <property type="project" value="UniProt"/>
</dbReference>
<dbReference type="GO" id="GO:0016567">
    <property type="term" value="P:protein ubiquitination"/>
    <property type="evidence" value="ECO:0000314"/>
    <property type="project" value="HGNC-UCL"/>
</dbReference>
<dbReference type="GO" id="GO:0016192">
    <property type="term" value="P:vesicle-mediated transport"/>
    <property type="evidence" value="ECO:0000318"/>
    <property type="project" value="GO_Central"/>
</dbReference>
<dbReference type="CDD" id="cd04158">
    <property type="entry name" value="ARD1"/>
    <property type="match status" value="1"/>
</dbReference>
<dbReference type="CDD" id="cd19773">
    <property type="entry name" value="Bbox2_TRIM23_C-IX_rpt1"/>
    <property type="match status" value="1"/>
</dbReference>
<dbReference type="CDD" id="cd19774">
    <property type="entry name" value="Bbox2_TRIM23_C-IX_rpt2"/>
    <property type="match status" value="1"/>
</dbReference>
<dbReference type="CDD" id="cd16645">
    <property type="entry name" value="mRING-HC-C3HC3D_TRIM23_C-IX"/>
    <property type="match status" value="1"/>
</dbReference>
<dbReference type="FunFam" id="3.30.160.60:FF:000440">
    <property type="entry name" value="E3 ubiquitin-protein ligase TRIM23"/>
    <property type="match status" value="1"/>
</dbReference>
<dbReference type="FunFam" id="3.30.40.10:FF:000130">
    <property type="entry name" value="E3 ubiquitin-protein ligase TRIM23"/>
    <property type="match status" value="1"/>
</dbReference>
<dbReference type="FunFam" id="3.40.50.300:FF:000486">
    <property type="entry name" value="E3 ubiquitin-protein ligase TRIM23"/>
    <property type="match status" value="1"/>
</dbReference>
<dbReference type="Gene3D" id="3.30.160.60">
    <property type="entry name" value="Classic Zinc Finger"/>
    <property type="match status" value="1"/>
</dbReference>
<dbReference type="Gene3D" id="3.40.50.300">
    <property type="entry name" value="P-loop containing nucleotide triphosphate hydrolases"/>
    <property type="match status" value="1"/>
</dbReference>
<dbReference type="Gene3D" id="3.30.40.10">
    <property type="entry name" value="Zinc/RING finger domain, C3HC4 (zinc finger)"/>
    <property type="match status" value="1"/>
</dbReference>
<dbReference type="InterPro" id="IPR003649">
    <property type="entry name" value="Bbox_C"/>
</dbReference>
<dbReference type="InterPro" id="IPR027417">
    <property type="entry name" value="P-loop_NTPase"/>
</dbReference>
<dbReference type="InterPro" id="IPR005225">
    <property type="entry name" value="Small_GTP-bd"/>
</dbReference>
<dbReference type="InterPro" id="IPR024156">
    <property type="entry name" value="Small_GTPase_ARF"/>
</dbReference>
<dbReference type="InterPro" id="IPR006689">
    <property type="entry name" value="Small_GTPase_ARF/SAR"/>
</dbReference>
<dbReference type="InterPro" id="IPR027370">
    <property type="entry name" value="Znf-RING_euk"/>
</dbReference>
<dbReference type="InterPro" id="IPR000315">
    <property type="entry name" value="Znf_B-box"/>
</dbReference>
<dbReference type="InterPro" id="IPR013087">
    <property type="entry name" value="Znf_C2H2_type"/>
</dbReference>
<dbReference type="InterPro" id="IPR001841">
    <property type="entry name" value="Znf_RING"/>
</dbReference>
<dbReference type="InterPro" id="IPR013083">
    <property type="entry name" value="Znf_RING/FYVE/PHD"/>
</dbReference>
<dbReference type="InterPro" id="IPR017907">
    <property type="entry name" value="Znf_RING_CS"/>
</dbReference>
<dbReference type="NCBIfam" id="TIGR00231">
    <property type="entry name" value="small_GTP"/>
    <property type="match status" value="1"/>
</dbReference>
<dbReference type="PANTHER" id="PTHR11711">
    <property type="entry name" value="ADP RIBOSYLATION FACTOR-RELATED"/>
    <property type="match status" value="1"/>
</dbReference>
<dbReference type="Pfam" id="PF00025">
    <property type="entry name" value="Arf"/>
    <property type="match status" value="1"/>
</dbReference>
<dbReference type="Pfam" id="PF00643">
    <property type="entry name" value="zf-B_box"/>
    <property type="match status" value="1"/>
</dbReference>
<dbReference type="Pfam" id="PF13445">
    <property type="entry name" value="zf-RING_UBOX"/>
    <property type="match status" value="1"/>
</dbReference>
<dbReference type="PRINTS" id="PR00328">
    <property type="entry name" value="SAR1GTPBP"/>
</dbReference>
<dbReference type="SMART" id="SM00177">
    <property type="entry name" value="ARF"/>
    <property type="match status" value="1"/>
</dbReference>
<dbReference type="SMART" id="SM00502">
    <property type="entry name" value="BBC"/>
    <property type="match status" value="1"/>
</dbReference>
<dbReference type="SMART" id="SM00336">
    <property type="entry name" value="BBOX"/>
    <property type="match status" value="2"/>
</dbReference>
<dbReference type="SMART" id="SM00175">
    <property type="entry name" value="RAB"/>
    <property type="match status" value="1"/>
</dbReference>
<dbReference type="SMART" id="SM00184">
    <property type="entry name" value="RING"/>
    <property type="match status" value="1"/>
</dbReference>
<dbReference type="SMART" id="SM00178">
    <property type="entry name" value="SAR"/>
    <property type="match status" value="1"/>
</dbReference>
<dbReference type="SUPFAM" id="SSF57845">
    <property type="entry name" value="B-box zinc-binding domain"/>
    <property type="match status" value="1"/>
</dbReference>
<dbReference type="SUPFAM" id="SSF52540">
    <property type="entry name" value="P-loop containing nucleoside triphosphate hydrolases"/>
    <property type="match status" value="1"/>
</dbReference>
<dbReference type="SUPFAM" id="SSF57850">
    <property type="entry name" value="RING/U-box"/>
    <property type="match status" value="1"/>
</dbReference>
<dbReference type="PROSITE" id="PS51417">
    <property type="entry name" value="ARF"/>
    <property type="match status" value="1"/>
</dbReference>
<dbReference type="PROSITE" id="PS50119">
    <property type="entry name" value="ZF_BBOX"/>
    <property type="match status" value="1"/>
</dbReference>
<dbReference type="PROSITE" id="PS00518">
    <property type="entry name" value="ZF_RING_1"/>
    <property type="match status" value="1"/>
</dbReference>
<dbReference type="PROSITE" id="PS50089">
    <property type="entry name" value="ZF_RING_2"/>
    <property type="match status" value="1"/>
</dbReference>
<keyword id="KW-0002">3D-structure</keyword>
<keyword id="KW-0025">Alternative splicing</keyword>
<keyword id="KW-0175">Coiled coil</keyword>
<keyword id="KW-0963">Cytoplasm</keyword>
<keyword id="KW-0333">Golgi apparatus</keyword>
<keyword id="KW-0342">GTP-binding</keyword>
<keyword id="KW-0945">Host-virus interaction</keyword>
<keyword id="KW-0391">Immunity</keyword>
<keyword id="KW-0399">Innate immunity</keyword>
<keyword id="KW-0458">Lysosome</keyword>
<keyword id="KW-0472">Membrane</keyword>
<keyword id="KW-0479">Metal-binding</keyword>
<keyword id="KW-0547">Nucleotide-binding</keyword>
<keyword id="KW-1267">Proteomics identification</keyword>
<keyword id="KW-1185">Reference proteome</keyword>
<keyword id="KW-0808">Transferase</keyword>
<keyword id="KW-0833">Ubl conjugation pathway</keyword>
<keyword id="KW-0862">Zinc</keyword>
<keyword id="KW-0863">Zinc-finger</keyword>
<proteinExistence type="evidence at protein level"/>